<name>ATX10_SCHPO</name>
<reference key="1">
    <citation type="journal article" date="2002" name="Nature">
        <title>The genome sequence of Schizosaccharomyces pombe.</title>
        <authorList>
            <person name="Wood V."/>
            <person name="Gwilliam R."/>
            <person name="Rajandream M.A."/>
            <person name="Lyne M.H."/>
            <person name="Lyne R."/>
            <person name="Stewart A."/>
            <person name="Sgouros J.G."/>
            <person name="Peat N."/>
            <person name="Hayles J."/>
            <person name="Baker S.G."/>
            <person name="Basham D."/>
            <person name="Bowman S."/>
            <person name="Brooks K."/>
            <person name="Brown D."/>
            <person name="Brown S."/>
            <person name="Chillingworth T."/>
            <person name="Churcher C.M."/>
            <person name="Collins M."/>
            <person name="Connor R."/>
            <person name="Cronin A."/>
            <person name="Davis P."/>
            <person name="Feltwell T."/>
            <person name="Fraser A."/>
            <person name="Gentles S."/>
            <person name="Goble A."/>
            <person name="Hamlin N."/>
            <person name="Harris D.E."/>
            <person name="Hidalgo J."/>
            <person name="Hodgson G."/>
            <person name="Holroyd S."/>
            <person name="Hornsby T."/>
            <person name="Howarth S."/>
            <person name="Huckle E.J."/>
            <person name="Hunt S."/>
            <person name="Jagels K."/>
            <person name="James K.D."/>
            <person name="Jones L."/>
            <person name="Jones M."/>
            <person name="Leather S."/>
            <person name="McDonald S."/>
            <person name="McLean J."/>
            <person name="Mooney P."/>
            <person name="Moule S."/>
            <person name="Mungall K.L."/>
            <person name="Murphy L.D."/>
            <person name="Niblett D."/>
            <person name="Odell C."/>
            <person name="Oliver K."/>
            <person name="O'Neil S."/>
            <person name="Pearson D."/>
            <person name="Quail M.A."/>
            <person name="Rabbinowitsch E."/>
            <person name="Rutherford K.M."/>
            <person name="Rutter S."/>
            <person name="Saunders D."/>
            <person name="Seeger K."/>
            <person name="Sharp S."/>
            <person name="Skelton J."/>
            <person name="Simmonds M.N."/>
            <person name="Squares R."/>
            <person name="Squares S."/>
            <person name="Stevens K."/>
            <person name="Taylor K."/>
            <person name="Taylor R.G."/>
            <person name="Tivey A."/>
            <person name="Walsh S.V."/>
            <person name="Warren T."/>
            <person name="Whitehead S."/>
            <person name="Woodward J.R."/>
            <person name="Volckaert G."/>
            <person name="Aert R."/>
            <person name="Robben J."/>
            <person name="Grymonprez B."/>
            <person name="Weltjens I."/>
            <person name="Vanstreels E."/>
            <person name="Rieger M."/>
            <person name="Schaefer M."/>
            <person name="Mueller-Auer S."/>
            <person name="Gabel C."/>
            <person name="Fuchs M."/>
            <person name="Duesterhoeft A."/>
            <person name="Fritzc C."/>
            <person name="Holzer E."/>
            <person name="Moestl D."/>
            <person name="Hilbert H."/>
            <person name="Borzym K."/>
            <person name="Langer I."/>
            <person name="Beck A."/>
            <person name="Lehrach H."/>
            <person name="Reinhardt R."/>
            <person name="Pohl T.M."/>
            <person name="Eger P."/>
            <person name="Zimmermann W."/>
            <person name="Wedler H."/>
            <person name="Wambutt R."/>
            <person name="Purnelle B."/>
            <person name="Goffeau A."/>
            <person name="Cadieu E."/>
            <person name="Dreano S."/>
            <person name="Gloux S."/>
            <person name="Lelaure V."/>
            <person name="Mottier S."/>
            <person name="Galibert F."/>
            <person name="Aves S.J."/>
            <person name="Xiang Z."/>
            <person name="Hunt C."/>
            <person name="Moore K."/>
            <person name="Hurst S.M."/>
            <person name="Lucas M."/>
            <person name="Rochet M."/>
            <person name="Gaillardin C."/>
            <person name="Tallada V.A."/>
            <person name="Garzon A."/>
            <person name="Thode G."/>
            <person name="Daga R.R."/>
            <person name="Cruzado L."/>
            <person name="Jimenez J."/>
            <person name="Sanchez M."/>
            <person name="del Rey F."/>
            <person name="Benito J."/>
            <person name="Dominguez A."/>
            <person name="Revuelta J.L."/>
            <person name="Moreno S."/>
            <person name="Armstrong J."/>
            <person name="Forsburg S.L."/>
            <person name="Cerutti L."/>
            <person name="Lowe T."/>
            <person name="McCombie W.R."/>
            <person name="Paulsen I."/>
            <person name="Potashkin J."/>
            <person name="Shpakovski G.V."/>
            <person name="Ussery D."/>
            <person name="Barrell B.G."/>
            <person name="Nurse P."/>
        </authorList>
    </citation>
    <scope>NUCLEOTIDE SEQUENCE [LARGE SCALE GENOMIC DNA]</scope>
    <source>
        <strain>972 / ATCC 24843</strain>
    </source>
</reference>
<reference key="2">
    <citation type="journal article" date="2011" name="Science">
        <title>Comparative functional genomics of the fission yeasts.</title>
        <authorList>
            <person name="Rhind N."/>
            <person name="Chen Z."/>
            <person name="Yassour M."/>
            <person name="Thompson D.A."/>
            <person name="Haas B.J."/>
            <person name="Habib N."/>
            <person name="Wapinski I."/>
            <person name="Roy S."/>
            <person name="Lin M.F."/>
            <person name="Heiman D.I."/>
            <person name="Young S.K."/>
            <person name="Furuya K."/>
            <person name="Guo Y."/>
            <person name="Pidoux A."/>
            <person name="Chen H.M."/>
            <person name="Robbertse B."/>
            <person name="Goldberg J.M."/>
            <person name="Aoki K."/>
            <person name="Bayne E.H."/>
            <person name="Berlin A.M."/>
            <person name="Desjardins C.A."/>
            <person name="Dobbs E."/>
            <person name="Dukaj L."/>
            <person name="Fan L."/>
            <person name="FitzGerald M.G."/>
            <person name="French C."/>
            <person name="Gujja S."/>
            <person name="Hansen K."/>
            <person name="Keifenheim D."/>
            <person name="Levin J.Z."/>
            <person name="Mosher R.A."/>
            <person name="Mueller C.A."/>
            <person name="Pfiffner J."/>
            <person name="Priest M."/>
            <person name="Russ C."/>
            <person name="Smialowska A."/>
            <person name="Swoboda P."/>
            <person name="Sykes S.M."/>
            <person name="Vaughn M."/>
            <person name="Vengrova S."/>
            <person name="Yoder R."/>
            <person name="Zeng Q."/>
            <person name="Allshire R."/>
            <person name="Baulcombe D."/>
            <person name="Birren B.W."/>
            <person name="Brown W."/>
            <person name="Ekwall K."/>
            <person name="Kellis M."/>
            <person name="Leatherwood J."/>
            <person name="Levin H."/>
            <person name="Margalit H."/>
            <person name="Martienssen R."/>
            <person name="Nieduszynski C.A."/>
            <person name="Spatafora J.W."/>
            <person name="Friedman N."/>
            <person name="Dalgaard J.Z."/>
            <person name="Baumann P."/>
            <person name="Niki H."/>
            <person name="Regev A."/>
            <person name="Nusbaum C."/>
        </authorList>
    </citation>
    <scope>REVISION OF GENE MODEL</scope>
</reference>
<reference key="3">
    <citation type="journal article" date="2005" name="Curr. Biol.">
        <title>A large-scale screen in S. pombe identifies seven novel genes required for critical meiotic events.</title>
        <authorList>
            <person name="Martin-Castellanos C."/>
            <person name="Blanco M."/>
            <person name="Rozalen A.E."/>
            <person name="Perez-Hidalgo L."/>
            <person name="Garcia A.I."/>
            <person name="Conde F."/>
            <person name="Mata J."/>
            <person name="Ellermeier C."/>
            <person name="Davis L."/>
            <person name="San-Segundo P."/>
            <person name="Smith G.R."/>
            <person name="Moreno S."/>
        </authorList>
    </citation>
    <scope>INDUCTION</scope>
</reference>
<reference key="4">
    <citation type="journal article" date="2006" name="Nat. Biotechnol.">
        <title>ORFeome cloning and global analysis of protein localization in the fission yeast Schizosaccharomyces pombe.</title>
        <authorList>
            <person name="Matsuyama A."/>
            <person name="Arai R."/>
            <person name="Yashiroda Y."/>
            <person name="Shirai A."/>
            <person name="Kamata A."/>
            <person name="Sekido S."/>
            <person name="Kobayashi Y."/>
            <person name="Hashimoto A."/>
            <person name="Hamamoto M."/>
            <person name="Hiraoka Y."/>
            <person name="Horinouchi S."/>
            <person name="Yoshida M."/>
        </authorList>
    </citation>
    <scope>SUBCELLULAR LOCATION [LARGE SCALE ANALYSIS]</scope>
</reference>
<dbReference type="EMBL" id="CU329672">
    <property type="protein sequence ID" value="CAB37427.2"/>
    <property type="molecule type" value="Genomic_DNA"/>
</dbReference>
<dbReference type="PIR" id="T39134">
    <property type="entry name" value="S62528"/>
</dbReference>
<dbReference type="RefSeq" id="NP_588219.2">
    <property type="nucleotide sequence ID" value="NM_001023209.2"/>
</dbReference>
<dbReference type="FunCoup" id="Q09888">
    <property type="interactions" value="414"/>
</dbReference>
<dbReference type="STRING" id="284812.Q09888"/>
<dbReference type="PaxDb" id="4896-SPCC584.14.1"/>
<dbReference type="EnsemblFungi" id="SPCC584.14.1">
    <property type="protein sequence ID" value="SPCC584.14.1:pep"/>
    <property type="gene ID" value="SPCC584.14"/>
</dbReference>
<dbReference type="GeneID" id="2539370"/>
<dbReference type="KEGG" id="spo:2539370"/>
<dbReference type="PomBase" id="SPCC584.14">
    <property type="gene designation" value="mug160"/>
</dbReference>
<dbReference type="VEuPathDB" id="FungiDB:SPCC584.14"/>
<dbReference type="eggNOG" id="KOG2676">
    <property type="taxonomic scope" value="Eukaryota"/>
</dbReference>
<dbReference type="HOGENOM" id="CLU_631859_0_0_1"/>
<dbReference type="InParanoid" id="Q09888"/>
<dbReference type="OMA" id="KRECVHF"/>
<dbReference type="PRO" id="PR:Q09888"/>
<dbReference type="Proteomes" id="UP000002485">
    <property type="component" value="Chromosome III"/>
</dbReference>
<dbReference type="GO" id="GO:0005829">
    <property type="term" value="C:cytosol"/>
    <property type="evidence" value="ECO:0007005"/>
    <property type="project" value="PomBase"/>
</dbReference>
<dbReference type="GO" id="GO:0005634">
    <property type="term" value="C:nucleus"/>
    <property type="evidence" value="ECO:0007005"/>
    <property type="project" value="PomBase"/>
</dbReference>
<dbReference type="GO" id="GO:0051301">
    <property type="term" value="P:cell division"/>
    <property type="evidence" value="ECO:0007669"/>
    <property type="project" value="UniProtKB-KW"/>
</dbReference>
<dbReference type="GO" id="GO:0051321">
    <property type="term" value="P:meiotic cell cycle"/>
    <property type="evidence" value="ECO:0007669"/>
    <property type="project" value="UniProtKB-KW"/>
</dbReference>
<dbReference type="GO" id="GO:0032465">
    <property type="term" value="P:regulation of cytokinesis"/>
    <property type="evidence" value="ECO:0000250"/>
    <property type="project" value="UniProtKB"/>
</dbReference>
<dbReference type="InterPro" id="IPR051374">
    <property type="entry name" value="Ataxin-10/CTR86_families"/>
</dbReference>
<dbReference type="InterPro" id="IPR019156">
    <property type="entry name" value="Ataxin-10_domain"/>
</dbReference>
<dbReference type="PANTHER" id="PTHR13255">
    <property type="entry name" value="ATAXIN-10"/>
    <property type="match status" value="1"/>
</dbReference>
<dbReference type="PANTHER" id="PTHR13255:SF0">
    <property type="entry name" value="ATAXIN-10"/>
    <property type="match status" value="1"/>
</dbReference>
<dbReference type="Pfam" id="PF09759">
    <property type="entry name" value="Atx10homo_assoc"/>
    <property type="match status" value="1"/>
</dbReference>
<proteinExistence type="evidence at transcript level"/>
<evidence type="ECO:0000250" key="1">
    <source>
        <dbReference type="UniProtKB" id="Q9UBB4"/>
    </source>
</evidence>
<evidence type="ECO:0000269" key="2">
    <source>
    </source>
</evidence>
<evidence type="ECO:0000269" key="3">
    <source>
    </source>
</evidence>
<evidence type="ECO:0000305" key="4"/>
<feature type="chain" id="PRO_0000116540" description="Ataxin-10 homolog">
    <location>
        <begin position="1"/>
        <end position="434"/>
    </location>
</feature>
<gene>
    <name type="primary">mug160</name>
    <name type="ORF">SPCC584.14</name>
</gene>
<comment type="function">
    <text evidence="1">May play a role in the regulation of cytokinesis.</text>
</comment>
<comment type="subcellular location">
    <subcellularLocation>
        <location evidence="3">Cytoplasm</location>
    </subcellularLocation>
    <subcellularLocation>
        <location evidence="3">Nucleus</location>
    </subcellularLocation>
</comment>
<comment type="induction">
    <text evidence="2">Expression is up-regulated during meiosis.</text>
</comment>
<comment type="similarity">
    <text evidence="4">Belongs to the ataxin-10 family.</text>
</comment>
<keyword id="KW-0131">Cell cycle</keyword>
<keyword id="KW-0132">Cell division</keyword>
<keyword id="KW-0963">Cytoplasm</keyword>
<keyword id="KW-0469">Meiosis</keyword>
<keyword id="KW-0539">Nucleus</keyword>
<keyword id="KW-1185">Reference proteome</keyword>
<accession>Q09888</accession>
<organism>
    <name type="scientific">Schizosaccharomyces pombe (strain 972 / ATCC 24843)</name>
    <name type="common">Fission yeast</name>
    <dbReference type="NCBI Taxonomy" id="284812"/>
    <lineage>
        <taxon>Eukaryota</taxon>
        <taxon>Fungi</taxon>
        <taxon>Dikarya</taxon>
        <taxon>Ascomycota</taxon>
        <taxon>Taphrinomycotina</taxon>
        <taxon>Schizosaccharomycetes</taxon>
        <taxon>Schizosaccharomycetales</taxon>
        <taxon>Schizosaccharomycetaceae</taxon>
        <taxon>Schizosaccharomyces</taxon>
    </lineage>
</organism>
<sequence>MEKMESTEEWEALLSSSSNGDELTMKLIRNGLAKGFKSQKAAGDAGLYSRFLPYHFTESVSNDSFSSLPWQIFANSVAGNSPLQNEAWAFLMDNEDFFLPVPMNPAQCTALEIALWSLIRVDDQRLFELCHSKSGIRLLSIIFDFDSHPDWLREDVMFNIAERILKSNFPNVLVNVASKIGPKSIYFLIDCMSHKIKLKETATGFYVILDVLSCVGRQFASVLEECFTKEISSAGLDHINHFSEIVMLGVDLLYRDYVSYDTTISLKNDDSSSLGDMEFETSQPSSSISEIIHLLAVLDKRIPKKTLVEKTYASSMELQELYNAVVGVKRECVRFIAFICSKFSTAPDLVRHFNGVALIISQANYDDWNPYIREISVLCTRLLLQNNIENQKIIGGLTPITTTHSDALEEAGFTSYINDKGKVVLQPKTAKNSH</sequence>
<protein>
    <recommendedName>
        <fullName evidence="4">Ataxin-10 homolog</fullName>
    </recommendedName>
    <alternativeName>
        <fullName evidence="4">Meiotically up-regulated gene 160 protein</fullName>
    </alternativeName>
</protein>